<comment type="function">
    <text evidence="1">Forms oxaloacetate, a four-carbon dicarboxylic acid source for the tricarboxylic acid cycle.</text>
</comment>
<comment type="catalytic activity">
    <reaction>
        <text>oxaloacetate + phosphate = phosphoenolpyruvate + hydrogencarbonate</text>
        <dbReference type="Rhea" id="RHEA:28370"/>
        <dbReference type="ChEBI" id="CHEBI:16452"/>
        <dbReference type="ChEBI" id="CHEBI:17544"/>
        <dbReference type="ChEBI" id="CHEBI:43474"/>
        <dbReference type="ChEBI" id="CHEBI:58702"/>
        <dbReference type="EC" id="4.1.1.31"/>
    </reaction>
</comment>
<comment type="cofactor">
    <cofactor evidence="1">
        <name>Mg(2+)</name>
        <dbReference type="ChEBI" id="CHEBI:18420"/>
    </cofactor>
</comment>
<comment type="similarity">
    <text evidence="2">Belongs to the PEPCase type 1 family.</text>
</comment>
<comment type="sequence caution" evidence="2">
    <conflict type="erroneous initiation">
        <sequence resource="EMBL-CDS" id="AAA22023"/>
    </conflict>
</comment>
<comment type="sequence caution" evidence="2">
    <conflict type="erroneous initiation">
        <sequence resource="EMBL-CDS" id="BAB76560"/>
    </conflict>
</comment>
<name>CAPP_NOSS1</name>
<feature type="chain" id="PRO_0000166578" description="Phosphoenolpyruvate carboxylase">
    <location>
        <begin position="1"/>
        <end position="1026"/>
    </location>
</feature>
<feature type="active site" evidence="1">
    <location>
        <position position="199"/>
    </location>
</feature>
<feature type="active site" evidence="1">
    <location>
        <position position="672"/>
    </location>
</feature>
<proteinExistence type="inferred from homology"/>
<gene>
    <name type="primary">ppc</name>
    <name type="synonym">pepC</name>
    <name type="ordered locus">all4861</name>
</gene>
<reference key="1">
    <citation type="journal article" date="1992" name="J. Gen. Microbiol.">
        <title>Identification, characterization and sequence analysis of the gene encoding phosphoenolpyruvate carboxylase in Anabaena sp. PCC 7120.</title>
        <authorList>
            <person name="Luinenburg I."/>
            <person name="Coleman J.R."/>
        </authorList>
    </citation>
    <scope>NUCLEOTIDE SEQUENCE [GENOMIC DNA]</scope>
</reference>
<reference key="2">
    <citation type="journal article" date="2001" name="DNA Res.">
        <title>Complete genomic sequence of the filamentous nitrogen-fixing cyanobacterium Anabaena sp. strain PCC 7120.</title>
        <authorList>
            <person name="Kaneko T."/>
            <person name="Nakamura Y."/>
            <person name="Wolk C.P."/>
            <person name="Kuritz T."/>
            <person name="Sasamoto S."/>
            <person name="Watanabe A."/>
            <person name="Iriguchi M."/>
            <person name="Ishikawa A."/>
            <person name="Kawashima K."/>
            <person name="Kimura T."/>
            <person name="Kishida Y."/>
            <person name="Kohara M."/>
            <person name="Matsumoto M."/>
            <person name="Matsuno A."/>
            <person name="Muraki A."/>
            <person name="Nakazaki N."/>
            <person name="Shimpo S."/>
            <person name="Sugimoto M."/>
            <person name="Takazawa M."/>
            <person name="Yamada M."/>
            <person name="Yasuda M."/>
            <person name="Tabata S."/>
        </authorList>
    </citation>
    <scope>NUCLEOTIDE SEQUENCE [LARGE SCALE GENOMIC DNA]</scope>
    <source>
        <strain>PCC 7120 / SAG 25.82 / UTEX 2576</strain>
    </source>
</reference>
<evidence type="ECO:0000250" key="1"/>
<evidence type="ECO:0000305" key="2"/>
<protein>
    <recommendedName>
        <fullName>Phosphoenolpyruvate carboxylase</fullName>
        <shortName>PEPC</shortName>
        <shortName>PEPCase</shortName>
        <ecNumber>4.1.1.31</ecNumber>
    </recommendedName>
</protein>
<accession>P28594</accession>
<dbReference type="EC" id="4.1.1.31"/>
<dbReference type="EMBL" id="M80541">
    <property type="protein sequence ID" value="AAA22023.1"/>
    <property type="status" value="ALT_INIT"/>
    <property type="molecule type" value="Genomic_DNA"/>
</dbReference>
<dbReference type="EMBL" id="BA000019">
    <property type="protein sequence ID" value="BAB76560.1"/>
    <property type="status" value="ALT_INIT"/>
    <property type="molecule type" value="Genomic_DNA"/>
</dbReference>
<dbReference type="PIR" id="A44831">
    <property type="entry name" value="A44831"/>
</dbReference>
<dbReference type="PIR" id="AE2413">
    <property type="entry name" value="AE2413"/>
</dbReference>
<dbReference type="RefSeq" id="WP_010998989.1">
    <property type="nucleotide sequence ID" value="NZ_RSCN01000037.1"/>
</dbReference>
<dbReference type="SMR" id="P28594"/>
<dbReference type="STRING" id="103690.gene:10496915"/>
<dbReference type="KEGG" id="ana:all4861"/>
<dbReference type="eggNOG" id="COG2352">
    <property type="taxonomic scope" value="Bacteria"/>
</dbReference>
<dbReference type="OrthoDB" id="9768133at2"/>
<dbReference type="BRENDA" id="4.1.1.31">
    <property type="organism ID" value="8113"/>
</dbReference>
<dbReference type="Proteomes" id="UP000002483">
    <property type="component" value="Chromosome"/>
</dbReference>
<dbReference type="GO" id="GO:0005829">
    <property type="term" value="C:cytosol"/>
    <property type="evidence" value="ECO:0007669"/>
    <property type="project" value="TreeGrafter"/>
</dbReference>
<dbReference type="GO" id="GO:0000287">
    <property type="term" value="F:magnesium ion binding"/>
    <property type="evidence" value="ECO:0007669"/>
    <property type="project" value="UniProtKB-UniRule"/>
</dbReference>
<dbReference type="GO" id="GO:0008964">
    <property type="term" value="F:phosphoenolpyruvate carboxylase activity"/>
    <property type="evidence" value="ECO:0007669"/>
    <property type="project" value="UniProtKB-UniRule"/>
</dbReference>
<dbReference type="GO" id="GO:0015977">
    <property type="term" value="P:carbon fixation"/>
    <property type="evidence" value="ECO:0007669"/>
    <property type="project" value="UniProtKB-UniRule"/>
</dbReference>
<dbReference type="GO" id="GO:0006107">
    <property type="term" value="P:oxaloacetate metabolic process"/>
    <property type="evidence" value="ECO:0007669"/>
    <property type="project" value="UniProtKB-UniRule"/>
</dbReference>
<dbReference type="GO" id="GO:0006099">
    <property type="term" value="P:tricarboxylic acid cycle"/>
    <property type="evidence" value="ECO:0007669"/>
    <property type="project" value="InterPro"/>
</dbReference>
<dbReference type="Gene3D" id="1.20.1440.90">
    <property type="entry name" value="Phosphoenolpyruvate/pyruvate domain"/>
    <property type="match status" value="1"/>
</dbReference>
<dbReference type="HAMAP" id="MF_00595">
    <property type="entry name" value="PEPcase_type1"/>
    <property type="match status" value="1"/>
</dbReference>
<dbReference type="InterPro" id="IPR021135">
    <property type="entry name" value="PEP_COase"/>
</dbReference>
<dbReference type="InterPro" id="IPR022805">
    <property type="entry name" value="PEP_COase_bac/pln-type"/>
</dbReference>
<dbReference type="InterPro" id="IPR018129">
    <property type="entry name" value="PEP_COase_Lys_AS"/>
</dbReference>
<dbReference type="InterPro" id="IPR033129">
    <property type="entry name" value="PEPCASE_His_AS"/>
</dbReference>
<dbReference type="InterPro" id="IPR015813">
    <property type="entry name" value="Pyrv/PenolPyrv_kinase-like_dom"/>
</dbReference>
<dbReference type="NCBIfam" id="NF000584">
    <property type="entry name" value="PRK00009.1"/>
    <property type="match status" value="1"/>
</dbReference>
<dbReference type="PANTHER" id="PTHR30523">
    <property type="entry name" value="PHOSPHOENOLPYRUVATE CARBOXYLASE"/>
    <property type="match status" value="1"/>
</dbReference>
<dbReference type="PANTHER" id="PTHR30523:SF6">
    <property type="entry name" value="PHOSPHOENOLPYRUVATE CARBOXYLASE"/>
    <property type="match status" value="1"/>
</dbReference>
<dbReference type="Pfam" id="PF00311">
    <property type="entry name" value="PEPcase"/>
    <property type="match status" value="1"/>
</dbReference>
<dbReference type="PRINTS" id="PR00150">
    <property type="entry name" value="PEPCARBXLASE"/>
</dbReference>
<dbReference type="SUPFAM" id="SSF51621">
    <property type="entry name" value="Phosphoenolpyruvate/pyruvate domain"/>
    <property type="match status" value="1"/>
</dbReference>
<dbReference type="PROSITE" id="PS00781">
    <property type="entry name" value="PEPCASE_1"/>
    <property type="match status" value="1"/>
</dbReference>
<dbReference type="PROSITE" id="PS00393">
    <property type="entry name" value="PEPCASE_2"/>
    <property type="match status" value="1"/>
</dbReference>
<keyword id="KW-0120">Carbon dioxide fixation</keyword>
<keyword id="KW-0456">Lyase</keyword>
<keyword id="KW-0460">Magnesium</keyword>
<keyword id="KW-1185">Reference proteome</keyword>
<organism>
    <name type="scientific">Nostoc sp. (strain PCC 7120 / SAG 25.82 / UTEX 2576)</name>
    <dbReference type="NCBI Taxonomy" id="103690"/>
    <lineage>
        <taxon>Bacteria</taxon>
        <taxon>Bacillati</taxon>
        <taxon>Cyanobacteriota</taxon>
        <taxon>Cyanophyceae</taxon>
        <taxon>Nostocales</taxon>
        <taxon>Nostocaceae</taxon>
        <taxon>Nostoc</taxon>
    </lineage>
</organism>
<sequence>MGSVLYSLSESANLYPASELFLRHRLQIVEELWESVLRQECGQNMVDLLRQLRDLCSPEGQATKDQAVSAVKLIEQLNINEAIRAARAFALYFQLINIIEQEYEQRQQLTRYSDLEAETAPLNGSENITSSSNHNEDDVIFNRGLGTDFLGKNWTNRGQGKQKGTFAALFPLLSKLNVPPQQIQRLISQLDVRLVFTAHPTEIVRHTIRDKQRQVVDLLQQLDEVENRAKDGGGYPWEAGEIREKLLEEIRLWWRTDELHQFKPTVLDEVDYALHYFQEVLFDGIPQLYKRFKYALNQTFSWLEPPSKDFCSFGSWVGSDRDGNPSVTPEITWQTACYQRKMVLERYIKSVTQLIELLSISMHWSDVLPDLLESLELDQSQLSEVYDALALRYRQEPYRLKLAYVLKRLENTRDRNLALYKGETPTNEDSPMYRSGSEFLAELRLIQHNLTETGLSCRELDNLICQVEIFDFNLTKLDIRQESTRHSDALNEILDYLQLLPQPYNDLSEEQRVAWLTTELQTRRPLISSELPFSDKTNDVIKTFRVVRSLQQEFGINICQTYIISMCRQVSDVLEVLLLAKEARLFDPAIAVGTIQVVPLFETVEDLQRSRSVMRQLFELPLYRALLAGGYKNTEVKVPNTELTPQSPAPSPQSVLTPDLQEVMLGYSDSNKDSGFLSSNWEIHKAQKSLQQIAEEYGVNLRIFHGRGGSVGRGGGPAHEAILAQPGHSINGRIKITEQGEVLASKYSLLDLALYNLETITTAVIQASLLRTGFDDIEPWNEIMEELAARSRQHYRGLIYEQPDFIDFFHQVTPIEEISQLQISSRPARRPSGKKDLSSLRAIPWVFSWTQTRFLLPSWYGVGTALQEFFNEEPEEHLKLMRYFYVKWPFFKMVISKVEMTLAKVDMQMAGHYVQELSDPEDKPRFEKVFEQIANEYYLTRDLVLKITDHGRLLDGDPVLQRSVQLRNGTIVPLGFIQVSLLKRLRQSKNNTATSGVIHSRYSKGELLRGALLTINGIAAGMRNTG</sequence>